<sequence length="638" mass="71364">MESHGKTHQKEHDNDLSPKPITLSKYSKRVELKTLLDRSDRGAGLAGKRVVIGGWVKSARAVKKNSPPPPLPVVAAPSPSSGGDQAHTTANIRCTEIIQSKMNIFKRFFDVLSGGGKTYPIFDKTELAGQKAVPPPEYVFYFLISDGSSISSLQVVVDSALSTVPATQLMALGTCIVAEGVLRLPLAASAKHVIELEAEKLLHVGTVDPEKYPLSKKQLPLHMLRDFSHFRPRTTTVGSVTRVHSALTLASHTFLQYHGFQYVQVPVITTTTGFGEMFRVTTLLGKTDDKEEKKPPVQEKDGFSIDTVKAVIKEKTRLIDHLKRSDSNRETVVAAVHDLKKTNDLASQIEMKQKSKTGTLVKPEKLDFSKDFFGRDTYLTASGRFHLESYASALGKVYTFGPRFIADKIDNARHLAEKWNVETEMAFAELDDAMDCADEYFKFLCKYVLENRDEDMKFISKRVDKTITTRLEATASSSLLRFSYTEVISLLQKATTTKFETKPEWGVALTTEHLSYLTDEIYKGPVIVHTYPKAIKQFYVRLNDDKKTVAAFDLVVPKVGVVITGSQNEERFEILDARIGESGFTREKFEWYLDLRRHGTVKHSGISLSMEQMLLYATGLPDIKDAIPFPRSWGKANN</sequence>
<evidence type="ECO:0000256" key="1">
    <source>
        <dbReference type="SAM" id="MobiDB-lite"/>
    </source>
</evidence>
<evidence type="ECO:0000303" key="2">
    <source>
    </source>
</evidence>
<evidence type="ECO:0000303" key="3">
    <source>
    </source>
</evidence>
<evidence type="ECO:0000305" key="4"/>
<evidence type="ECO:0000305" key="5">
    <source>
    </source>
</evidence>
<evidence type="ECO:0000305" key="6">
    <source>
    </source>
</evidence>
<feature type="chain" id="PRO_0000176492" description="Asparagine--tRNA ligase, cytoplasmic 2">
    <location>
        <begin position="1"/>
        <end position="638"/>
    </location>
</feature>
<feature type="region of interest" description="Disordered" evidence="1">
    <location>
        <begin position="1"/>
        <end position="23"/>
    </location>
</feature>
<feature type="region of interest" description="Disordered" evidence="1">
    <location>
        <begin position="62"/>
        <end position="87"/>
    </location>
</feature>
<feature type="compositionally biased region" description="Basic and acidic residues" evidence="1">
    <location>
        <begin position="1"/>
        <end position="16"/>
    </location>
</feature>
<feature type="sequence conflict" description="In Ref. 1; AAD46682." evidence="4" ref="1">
    <original>S</original>
    <variation>L</variation>
    <location>
        <position position="24"/>
    </location>
</feature>
<feature type="sequence conflict" description="In Ref. 1; AAD46682." evidence="4" ref="1">
    <original>L</original>
    <variation>F</variation>
    <location>
        <position position="284"/>
    </location>
</feature>
<feature type="sequence conflict" description="In Ref. 1; AAD46682." evidence="4" ref="1">
    <original>R</original>
    <variation>Q</variation>
    <location>
        <position position="329"/>
    </location>
</feature>
<feature type="sequence conflict" description="In Ref. 4; AAO64877 and 5; CAA10905." evidence="4" ref="4 5">
    <original>S</original>
    <variation>L</variation>
    <location>
        <position position="460"/>
    </location>
</feature>
<protein>
    <recommendedName>
        <fullName evidence="4">Asparagine--tRNA ligase, cytoplasmic 2</fullName>
        <ecNumber evidence="4">6.1.1.22</ecNumber>
    </recommendedName>
    <alternativeName>
        <fullName evidence="4">Asparaginyl-tRNA synthetase 2</fullName>
        <shortName evidence="4">AsnRS 2</shortName>
    </alternativeName>
    <alternativeName>
        <fullName evidence="3">AtNS2</fullName>
    </alternativeName>
</protein>
<comment type="catalytic activity">
    <reaction evidence="4">
        <text>tRNA(Asn) + L-asparagine + ATP = L-asparaginyl-tRNA(Asn) + AMP + diphosphate + H(+)</text>
        <dbReference type="Rhea" id="RHEA:11180"/>
        <dbReference type="Rhea" id="RHEA-COMP:9659"/>
        <dbReference type="Rhea" id="RHEA-COMP:9674"/>
        <dbReference type="ChEBI" id="CHEBI:15378"/>
        <dbReference type="ChEBI" id="CHEBI:30616"/>
        <dbReference type="ChEBI" id="CHEBI:33019"/>
        <dbReference type="ChEBI" id="CHEBI:58048"/>
        <dbReference type="ChEBI" id="CHEBI:78442"/>
        <dbReference type="ChEBI" id="CHEBI:78515"/>
        <dbReference type="ChEBI" id="CHEBI:456215"/>
        <dbReference type="EC" id="6.1.1.22"/>
    </reaction>
</comment>
<comment type="subcellular location">
    <subcellularLocation>
        <location evidence="5 6">Cytoplasm</location>
        <location evidence="5 6">Cytosol</location>
    </subcellularLocation>
</comment>
<comment type="similarity">
    <text evidence="4">Belongs to the class-II aminoacyl-tRNA synthetase family.</text>
</comment>
<proteinExistence type="evidence at protein level"/>
<dbReference type="EC" id="6.1.1.22" evidence="4"/>
<dbReference type="EMBL" id="AF170910">
    <property type="protein sequence ID" value="AAD46682.1"/>
    <property type="molecule type" value="mRNA"/>
</dbReference>
<dbReference type="EMBL" id="AC009853">
    <property type="protein sequence ID" value="AAF02166.1"/>
    <property type="molecule type" value="Genomic_DNA"/>
</dbReference>
<dbReference type="EMBL" id="CP002686">
    <property type="protein sequence ID" value="AEE74540.1"/>
    <property type="molecule type" value="Genomic_DNA"/>
</dbReference>
<dbReference type="EMBL" id="AK117215">
    <property type="protein sequence ID" value="BAC41891.1"/>
    <property type="molecule type" value="mRNA"/>
</dbReference>
<dbReference type="EMBL" id="BT005942">
    <property type="protein sequence ID" value="AAO64877.1"/>
    <property type="molecule type" value="mRNA"/>
</dbReference>
<dbReference type="EMBL" id="AJ222645">
    <property type="protein sequence ID" value="CAA10905.1"/>
    <property type="molecule type" value="mRNA"/>
</dbReference>
<dbReference type="RefSeq" id="NP_187398.1">
    <property type="nucleotide sequence ID" value="NM_111621.4"/>
</dbReference>
<dbReference type="SMR" id="Q9SW95"/>
<dbReference type="FunCoup" id="Q9SW95">
    <property type="interactions" value="357"/>
</dbReference>
<dbReference type="IntAct" id="Q9SW95">
    <property type="interactions" value="1"/>
</dbReference>
<dbReference type="STRING" id="3702.Q9SW95"/>
<dbReference type="iPTMnet" id="Q9SW95"/>
<dbReference type="PaxDb" id="3702-AT3G07420.1"/>
<dbReference type="ProteomicsDB" id="228480"/>
<dbReference type="EnsemblPlants" id="AT3G07420.1">
    <property type="protein sequence ID" value="AT3G07420.1"/>
    <property type="gene ID" value="AT3G07420"/>
</dbReference>
<dbReference type="GeneID" id="819930"/>
<dbReference type="Gramene" id="AT3G07420.1">
    <property type="protein sequence ID" value="AT3G07420.1"/>
    <property type="gene ID" value="AT3G07420"/>
</dbReference>
<dbReference type="KEGG" id="ath:AT3G07420"/>
<dbReference type="Araport" id="AT3G07420"/>
<dbReference type="TAIR" id="AT3G07420">
    <property type="gene designation" value="NS2"/>
</dbReference>
<dbReference type="eggNOG" id="KOG0554">
    <property type="taxonomic scope" value="Eukaryota"/>
</dbReference>
<dbReference type="HOGENOM" id="CLU_004553_2_0_1"/>
<dbReference type="InParanoid" id="Q9SW95"/>
<dbReference type="OMA" id="CHTLHLE"/>
<dbReference type="PhylomeDB" id="Q9SW95"/>
<dbReference type="PRO" id="PR:Q9SW95"/>
<dbReference type="Proteomes" id="UP000006548">
    <property type="component" value="Chromosome 3"/>
</dbReference>
<dbReference type="ExpressionAtlas" id="Q9SW95">
    <property type="expression patterns" value="baseline and differential"/>
</dbReference>
<dbReference type="GO" id="GO:0009507">
    <property type="term" value="C:chloroplast"/>
    <property type="evidence" value="ECO:0000314"/>
    <property type="project" value="TAIR"/>
</dbReference>
<dbReference type="GO" id="GO:0005829">
    <property type="term" value="C:cytosol"/>
    <property type="evidence" value="ECO:0007669"/>
    <property type="project" value="UniProtKB-SubCell"/>
</dbReference>
<dbReference type="GO" id="GO:0005739">
    <property type="term" value="C:mitochondrion"/>
    <property type="evidence" value="ECO:0000314"/>
    <property type="project" value="TAIR"/>
</dbReference>
<dbReference type="GO" id="GO:0004816">
    <property type="term" value="F:asparagine-tRNA ligase activity"/>
    <property type="evidence" value="ECO:0000250"/>
    <property type="project" value="TAIR"/>
</dbReference>
<dbReference type="GO" id="GO:0005524">
    <property type="term" value="F:ATP binding"/>
    <property type="evidence" value="ECO:0007669"/>
    <property type="project" value="UniProtKB-KW"/>
</dbReference>
<dbReference type="GO" id="GO:0006421">
    <property type="term" value="P:asparaginyl-tRNA aminoacylation"/>
    <property type="evidence" value="ECO:0000250"/>
    <property type="project" value="TAIR"/>
</dbReference>
<dbReference type="CDD" id="cd04318">
    <property type="entry name" value="EcAsnRS_like_N"/>
    <property type="match status" value="1"/>
</dbReference>
<dbReference type="Gene3D" id="3.30.930.10">
    <property type="entry name" value="Bira Bifunctional Protein, Domain 2"/>
    <property type="match status" value="1"/>
</dbReference>
<dbReference type="InterPro" id="IPR004364">
    <property type="entry name" value="Aa-tRNA-synt_II"/>
</dbReference>
<dbReference type="InterPro" id="IPR045864">
    <property type="entry name" value="aa-tRNA-synth_II/BPL/LPL"/>
</dbReference>
<dbReference type="InterPro" id="IPR004522">
    <property type="entry name" value="Asn-tRNA-ligase"/>
</dbReference>
<dbReference type="NCBIfam" id="TIGR00457">
    <property type="entry name" value="asnS"/>
    <property type="match status" value="1"/>
</dbReference>
<dbReference type="PANTHER" id="PTHR22594:SF36">
    <property type="entry name" value="ASPARAGINE--TRNA LIGASE, CYTOPLASMIC 2"/>
    <property type="match status" value="1"/>
</dbReference>
<dbReference type="PANTHER" id="PTHR22594">
    <property type="entry name" value="ASPARTYL/LYSYL-TRNA SYNTHETASE"/>
    <property type="match status" value="1"/>
</dbReference>
<dbReference type="Pfam" id="PF00152">
    <property type="entry name" value="tRNA-synt_2"/>
    <property type="match status" value="1"/>
</dbReference>
<dbReference type="SUPFAM" id="SSF55681">
    <property type="entry name" value="Class II aaRS and biotin synthetases"/>
    <property type="match status" value="1"/>
</dbReference>
<name>SYNC2_ARATH</name>
<accession>Q9SW95</accession>
<accession>O48594</accession>
<accession>Q8GZ48</accession>
<accession>Q9SRS4</accession>
<keyword id="KW-0030">Aminoacyl-tRNA synthetase</keyword>
<keyword id="KW-0067">ATP-binding</keyword>
<keyword id="KW-0963">Cytoplasm</keyword>
<keyword id="KW-0436">Ligase</keyword>
<keyword id="KW-0547">Nucleotide-binding</keyword>
<keyword id="KW-0648">Protein biosynthesis</keyword>
<keyword id="KW-1185">Reference proteome</keyword>
<reference key="1">
    <citation type="journal article" date="2000" name="J. Mol. Evol.">
        <title>Duplication and quadruplication of Arabidopsis thaliana cysteinyl- and asparaginyl-tRNA synthetase genes of organellar origin.</title>
        <authorList>
            <person name="Peeters N.M."/>
            <person name="Chapron A."/>
            <person name="Giritch A."/>
            <person name="Grandjean O."/>
            <person name="Lancelin D."/>
            <person name="Lhomme T."/>
            <person name="Vivrel A."/>
            <person name="Small I."/>
        </authorList>
    </citation>
    <scope>NUCLEOTIDE SEQUENCE [MRNA]</scope>
    <source>
        <strain>cv. Columbia</strain>
    </source>
</reference>
<reference key="2">
    <citation type="journal article" date="2000" name="Nature">
        <title>Sequence and analysis of chromosome 3 of the plant Arabidopsis thaliana.</title>
        <authorList>
            <person name="Salanoubat M."/>
            <person name="Lemcke K."/>
            <person name="Rieger M."/>
            <person name="Ansorge W."/>
            <person name="Unseld M."/>
            <person name="Fartmann B."/>
            <person name="Valle G."/>
            <person name="Bloecker H."/>
            <person name="Perez-Alonso M."/>
            <person name="Obermaier B."/>
            <person name="Delseny M."/>
            <person name="Boutry M."/>
            <person name="Grivell L.A."/>
            <person name="Mache R."/>
            <person name="Puigdomenech P."/>
            <person name="De Simone V."/>
            <person name="Choisne N."/>
            <person name="Artiguenave F."/>
            <person name="Robert C."/>
            <person name="Brottier P."/>
            <person name="Wincker P."/>
            <person name="Cattolico L."/>
            <person name="Weissenbach J."/>
            <person name="Saurin W."/>
            <person name="Quetier F."/>
            <person name="Schaefer M."/>
            <person name="Mueller-Auer S."/>
            <person name="Gabel C."/>
            <person name="Fuchs M."/>
            <person name="Benes V."/>
            <person name="Wurmbach E."/>
            <person name="Drzonek H."/>
            <person name="Erfle H."/>
            <person name="Jordan N."/>
            <person name="Bangert S."/>
            <person name="Wiedelmann R."/>
            <person name="Kranz H."/>
            <person name="Voss H."/>
            <person name="Holland R."/>
            <person name="Brandt P."/>
            <person name="Nyakatura G."/>
            <person name="Vezzi A."/>
            <person name="D'Angelo M."/>
            <person name="Pallavicini A."/>
            <person name="Toppo S."/>
            <person name="Simionati B."/>
            <person name="Conrad A."/>
            <person name="Hornischer K."/>
            <person name="Kauer G."/>
            <person name="Loehnert T.-H."/>
            <person name="Nordsiek G."/>
            <person name="Reichelt J."/>
            <person name="Scharfe M."/>
            <person name="Schoen O."/>
            <person name="Bargues M."/>
            <person name="Terol J."/>
            <person name="Climent J."/>
            <person name="Navarro P."/>
            <person name="Collado C."/>
            <person name="Perez-Perez A."/>
            <person name="Ottenwaelder B."/>
            <person name="Duchemin D."/>
            <person name="Cooke R."/>
            <person name="Laudie M."/>
            <person name="Berger-Llauro C."/>
            <person name="Purnelle B."/>
            <person name="Masuy D."/>
            <person name="de Haan M."/>
            <person name="Maarse A.C."/>
            <person name="Alcaraz J.-P."/>
            <person name="Cottet A."/>
            <person name="Casacuberta E."/>
            <person name="Monfort A."/>
            <person name="Argiriou A."/>
            <person name="Flores M."/>
            <person name="Liguori R."/>
            <person name="Vitale D."/>
            <person name="Mannhaupt G."/>
            <person name="Haase D."/>
            <person name="Schoof H."/>
            <person name="Rudd S."/>
            <person name="Zaccaria P."/>
            <person name="Mewes H.-W."/>
            <person name="Mayer K.F.X."/>
            <person name="Kaul S."/>
            <person name="Town C.D."/>
            <person name="Koo H.L."/>
            <person name="Tallon L.J."/>
            <person name="Jenkins J."/>
            <person name="Rooney T."/>
            <person name="Rizzo M."/>
            <person name="Walts A."/>
            <person name="Utterback T."/>
            <person name="Fujii C.Y."/>
            <person name="Shea T.P."/>
            <person name="Creasy T.H."/>
            <person name="Haas B."/>
            <person name="Maiti R."/>
            <person name="Wu D."/>
            <person name="Peterson J."/>
            <person name="Van Aken S."/>
            <person name="Pai G."/>
            <person name="Militscher J."/>
            <person name="Sellers P."/>
            <person name="Gill J.E."/>
            <person name="Feldblyum T.V."/>
            <person name="Preuss D."/>
            <person name="Lin X."/>
            <person name="Nierman W.C."/>
            <person name="Salzberg S.L."/>
            <person name="White O."/>
            <person name="Venter J.C."/>
            <person name="Fraser C.M."/>
            <person name="Kaneko T."/>
            <person name="Nakamura Y."/>
            <person name="Sato S."/>
            <person name="Kato T."/>
            <person name="Asamizu E."/>
            <person name="Sasamoto S."/>
            <person name="Kimura T."/>
            <person name="Idesawa K."/>
            <person name="Kawashima K."/>
            <person name="Kishida Y."/>
            <person name="Kiyokawa C."/>
            <person name="Kohara M."/>
            <person name="Matsumoto M."/>
            <person name="Matsuno A."/>
            <person name="Muraki A."/>
            <person name="Nakayama S."/>
            <person name="Nakazaki N."/>
            <person name="Shinpo S."/>
            <person name="Takeuchi C."/>
            <person name="Wada T."/>
            <person name="Watanabe A."/>
            <person name="Yamada M."/>
            <person name="Yasuda M."/>
            <person name="Tabata S."/>
        </authorList>
    </citation>
    <scope>NUCLEOTIDE SEQUENCE [LARGE SCALE GENOMIC DNA]</scope>
    <source>
        <strain>cv. Columbia</strain>
    </source>
</reference>
<reference key="3">
    <citation type="journal article" date="2017" name="Plant J.">
        <title>Araport11: a complete reannotation of the Arabidopsis thaliana reference genome.</title>
        <authorList>
            <person name="Cheng C.Y."/>
            <person name="Krishnakumar V."/>
            <person name="Chan A.P."/>
            <person name="Thibaud-Nissen F."/>
            <person name="Schobel S."/>
            <person name="Town C.D."/>
        </authorList>
    </citation>
    <scope>GENOME REANNOTATION</scope>
    <source>
        <strain>cv. Columbia</strain>
    </source>
</reference>
<reference key="4">
    <citation type="journal article" date="2002" name="Science">
        <title>Functional annotation of a full-length Arabidopsis cDNA collection.</title>
        <authorList>
            <person name="Seki M."/>
            <person name="Narusaka M."/>
            <person name="Kamiya A."/>
            <person name="Ishida J."/>
            <person name="Satou M."/>
            <person name="Sakurai T."/>
            <person name="Nakajima M."/>
            <person name="Enju A."/>
            <person name="Akiyama K."/>
            <person name="Oono Y."/>
            <person name="Muramatsu M."/>
            <person name="Hayashizaki Y."/>
            <person name="Kawai J."/>
            <person name="Carninci P."/>
            <person name="Itoh M."/>
            <person name="Ishii Y."/>
            <person name="Arakawa T."/>
            <person name="Shibata K."/>
            <person name="Shinagawa A."/>
            <person name="Shinozaki K."/>
        </authorList>
    </citation>
    <scope>NUCLEOTIDE SEQUENCE [LARGE SCALE MRNA]</scope>
    <source>
        <strain>cv. Columbia</strain>
    </source>
</reference>
<reference key="5">
    <citation type="journal article" date="2003" name="Science">
        <title>Empirical analysis of transcriptional activity in the Arabidopsis genome.</title>
        <authorList>
            <person name="Yamada K."/>
            <person name="Lim J."/>
            <person name="Dale J.M."/>
            <person name="Chen H."/>
            <person name="Shinn P."/>
            <person name="Palm C.J."/>
            <person name="Southwick A.M."/>
            <person name="Wu H.C."/>
            <person name="Kim C.J."/>
            <person name="Nguyen M."/>
            <person name="Pham P.K."/>
            <person name="Cheuk R.F."/>
            <person name="Karlin-Newmann G."/>
            <person name="Liu S.X."/>
            <person name="Lam B."/>
            <person name="Sakano H."/>
            <person name="Wu T."/>
            <person name="Yu G."/>
            <person name="Miranda M."/>
            <person name="Quach H.L."/>
            <person name="Tripp M."/>
            <person name="Chang C.H."/>
            <person name="Lee J.M."/>
            <person name="Toriumi M.J."/>
            <person name="Chan M.M."/>
            <person name="Tang C.C."/>
            <person name="Onodera C.S."/>
            <person name="Deng J.M."/>
            <person name="Akiyama K."/>
            <person name="Ansari Y."/>
            <person name="Arakawa T."/>
            <person name="Banh J."/>
            <person name="Banno F."/>
            <person name="Bowser L."/>
            <person name="Brooks S.Y."/>
            <person name="Carninci P."/>
            <person name="Chao Q."/>
            <person name="Choy N."/>
            <person name="Enju A."/>
            <person name="Goldsmith A.D."/>
            <person name="Gurjal M."/>
            <person name="Hansen N.F."/>
            <person name="Hayashizaki Y."/>
            <person name="Johnson-Hopson C."/>
            <person name="Hsuan V.W."/>
            <person name="Iida K."/>
            <person name="Karnes M."/>
            <person name="Khan S."/>
            <person name="Koesema E."/>
            <person name="Ishida J."/>
            <person name="Jiang P.X."/>
            <person name="Jones T."/>
            <person name="Kawai J."/>
            <person name="Kamiya A."/>
            <person name="Meyers C."/>
            <person name="Nakajima M."/>
            <person name="Narusaka M."/>
            <person name="Seki M."/>
            <person name="Sakurai T."/>
            <person name="Satou M."/>
            <person name="Tamse R."/>
            <person name="Vaysberg M."/>
            <person name="Wallender E.K."/>
            <person name="Wong C."/>
            <person name="Yamamura Y."/>
            <person name="Yuan S."/>
            <person name="Shinozaki K."/>
            <person name="Davis R.W."/>
            <person name="Theologis A."/>
            <person name="Ecker J.R."/>
        </authorList>
    </citation>
    <scope>NUCLEOTIDE SEQUENCE [LARGE SCALE MRNA]</scope>
    <source>
        <strain>cv. Columbia</strain>
    </source>
</reference>
<reference key="6">
    <citation type="journal article" date="1998" name="Biochim. Biophys. Acta">
        <title>Structure and expression of an asparaginyl-tRNA synthetase gene located on chromosome IV of Arabidopsis thaliana and adjacent to a novel large gene of 15 exons.</title>
        <authorList>
            <person name="Aubourg S."/>
            <person name="Cheron A."/>
            <person name="Kreis M."/>
            <person name="Lecharny A."/>
        </authorList>
    </citation>
    <scope>NUCLEOTIDE SEQUENCE [MRNA] OF 363-638</scope>
    <source>
        <strain>cv. Columbia</strain>
        <tissue>Leaf</tissue>
    </source>
</reference>
<reference key="7">
    <citation type="journal article" date="2005" name="Plant J.">
        <title>Requirement of aminoacyl-tRNA synthetases for gametogenesis and embryo development in Arabidopsis.</title>
        <authorList>
            <person name="Berg M."/>
            <person name="Rogers R."/>
            <person name="Muralla R."/>
            <person name="Meinke D."/>
        </authorList>
    </citation>
    <scope>SUBCELLULAR LOCATION</scope>
</reference>
<reference key="8">
    <citation type="journal article" date="2005" name="Proc. Natl. Acad. Sci. U.S.A.">
        <title>Dual targeting is the rule for organellar aminoacyl-tRNA synthetases in Arabidopsis thaliana.</title>
        <authorList>
            <person name="Duchene A.-M."/>
            <person name="Giritch A."/>
            <person name="Hoffmann B."/>
            <person name="Cognat V."/>
            <person name="Lancelin D."/>
            <person name="Peeters N.M."/>
            <person name="Zaepfel M."/>
            <person name="Marechal-Drouard L."/>
            <person name="Small I.D."/>
        </authorList>
    </citation>
    <scope>SUBCELLULAR LOCATION</scope>
</reference>
<reference key="9">
    <citation type="journal article" date="2009" name="Plant Physiol.">
        <title>Large-scale Arabidopsis phosphoproteome profiling reveals novel chloroplast kinase substrates and phosphorylation networks.</title>
        <authorList>
            <person name="Reiland S."/>
            <person name="Messerli G."/>
            <person name="Baerenfaller K."/>
            <person name="Gerrits B."/>
            <person name="Endler A."/>
            <person name="Grossmann J."/>
            <person name="Gruissem W."/>
            <person name="Baginsky S."/>
        </authorList>
    </citation>
    <scope>IDENTIFICATION BY MASS SPECTROMETRY [LARGE SCALE ANALYSIS]</scope>
</reference>
<gene>
    <name evidence="2" type="primary">SYNC2</name>
    <name evidence="3" type="synonym">NS2</name>
    <name type="ordered locus">At3g07420</name>
    <name type="ORF">F21O3.13</name>
</gene>
<organism>
    <name type="scientific">Arabidopsis thaliana</name>
    <name type="common">Mouse-ear cress</name>
    <dbReference type="NCBI Taxonomy" id="3702"/>
    <lineage>
        <taxon>Eukaryota</taxon>
        <taxon>Viridiplantae</taxon>
        <taxon>Streptophyta</taxon>
        <taxon>Embryophyta</taxon>
        <taxon>Tracheophyta</taxon>
        <taxon>Spermatophyta</taxon>
        <taxon>Magnoliopsida</taxon>
        <taxon>eudicotyledons</taxon>
        <taxon>Gunneridae</taxon>
        <taxon>Pentapetalae</taxon>
        <taxon>rosids</taxon>
        <taxon>malvids</taxon>
        <taxon>Brassicales</taxon>
        <taxon>Brassicaceae</taxon>
        <taxon>Camelineae</taxon>
        <taxon>Arabidopsis</taxon>
    </lineage>
</organism>